<dbReference type="EC" id="1.97.1.4"/>
<dbReference type="EMBL" id="AE017262">
    <property type="protein sequence ID" value="AAT04201.1"/>
    <property type="molecule type" value="Genomic_DNA"/>
</dbReference>
<dbReference type="RefSeq" id="WP_003721912.1">
    <property type="nucleotide sequence ID" value="NC_002973.6"/>
</dbReference>
<dbReference type="SMR" id="Q71ZR3"/>
<dbReference type="GeneID" id="93234825"/>
<dbReference type="KEGG" id="lmf:LMOf2365_1426"/>
<dbReference type="HOGENOM" id="CLU_058969_1_1_9"/>
<dbReference type="GO" id="GO:0005737">
    <property type="term" value="C:cytoplasm"/>
    <property type="evidence" value="ECO:0007669"/>
    <property type="project" value="UniProtKB-SubCell"/>
</dbReference>
<dbReference type="GO" id="GO:0051539">
    <property type="term" value="F:4 iron, 4 sulfur cluster binding"/>
    <property type="evidence" value="ECO:0007669"/>
    <property type="project" value="UniProtKB-KW"/>
</dbReference>
<dbReference type="GO" id="GO:0043365">
    <property type="term" value="F:[formate-C-acetyltransferase]-activating enzyme activity"/>
    <property type="evidence" value="ECO:0007669"/>
    <property type="project" value="UniProtKB-EC"/>
</dbReference>
<dbReference type="GO" id="GO:0046872">
    <property type="term" value="F:metal ion binding"/>
    <property type="evidence" value="ECO:0007669"/>
    <property type="project" value="UniProtKB-KW"/>
</dbReference>
<dbReference type="CDD" id="cd01335">
    <property type="entry name" value="Radical_SAM"/>
    <property type="match status" value="1"/>
</dbReference>
<dbReference type="Gene3D" id="3.20.20.70">
    <property type="entry name" value="Aldolase class I"/>
    <property type="match status" value="1"/>
</dbReference>
<dbReference type="InterPro" id="IPR013785">
    <property type="entry name" value="Aldolase_TIM"/>
</dbReference>
<dbReference type="InterPro" id="IPR034457">
    <property type="entry name" value="Organic_radical-activating"/>
</dbReference>
<dbReference type="InterPro" id="IPR012839">
    <property type="entry name" value="Organic_radical_activase"/>
</dbReference>
<dbReference type="InterPro" id="IPR012838">
    <property type="entry name" value="PFL1_activating"/>
</dbReference>
<dbReference type="InterPro" id="IPR034465">
    <property type="entry name" value="Pyruvate_for-lyase_activase"/>
</dbReference>
<dbReference type="InterPro" id="IPR001989">
    <property type="entry name" value="Radical_activat_CS"/>
</dbReference>
<dbReference type="InterPro" id="IPR007197">
    <property type="entry name" value="rSAM"/>
</dbReference>
<dbReference type="NCBIfam" id="TIGR02493">
    <property type="entry name" value="PFLA"/>
    <property type="match status" value="1"/>
</dbReference>
<dbReference type="PANTHER" id="PTHR30352:SF5">
    <property type="entry name" value="PYRUVATE FORMATE-LYASE 1-ACTIVATING ENZYME"/>
    <property type="match status" value="1"/>
</dbReference>
<dbReference type="PANTHER" id="PTHR30352">
    <property type="entry name" value="PYRUVATE FORMATE-LYASE-ACTIVATING ENZYME"/>
    <property type="match status" value="1"/>
</dbReference>
<dbReference type="Pfam" id="PF13353">
    <property type="entry name" value="Fer4_12"/>
    <property type="match status" value="1"/>
</dbReference>
<dbReference type="Pfam" id="PF04055">
    <property type="entry name" value="Radical_SAM"/>
    <property type="match status" value="1"/>
</dbReference>
<dbReference type="PIRSF" id="PIRSF000371">
    <property type="entry name" value="PFL_act_enz"/>
    <property type="match status" value="1"/>
</dbReference>
<dbReference type="SFLD" id="SFLDG01066">
    <property type="entry name" value="organic_radical-activating_enz"/>
    <property type="match status" value="1"/>
</dbReference>
<dbReference type="SFLD" id="SFLDF00278">
    <property type="entry name" value="pyruvate_formate-lyase_activas"/>
    <property type="match status" value="1"/>
</dbReference>
<dbReference type="SUPFAM" id="SSF102114">
    <property type="entry name" value="Radical SAM enzymes"/>
    <property type="match status" value="1"/>
</dbReference>
<dbReference type="PROSITE" id="PS01087">
    <property type="entry name" value="RADICAL_ACTIVATING"/>
    <property type="match status" value="1"/>
</dbReference>
<dbReference type="PROSITE" id="PS51918">
    <property type="entry name" value="RADICAL_SAM"/>
    <property type="match status" value="1"/>
</dbReference>
<keyword id="KW-0004">4Fe-4S</keyword>
<keyword id="KW-0963">Cytoplasm</keyword>
<keyword id="KW-0408">Iron</keyword>
<keyword id="KW-0411">Iron-sulfur</keyword>
<keyword id="KW-0479">Metal-binding</keyword>
<keyword id="KW-0560">Oxidoreductase</keyword>
<keyword id="KW-0949">S-adenosyl-L-methionine</keyword>
<organism>
    <name type="scientific">Listeria monocytogenes serotype 4b (strain F2365)</name>
    <dbReference type="NCBI Taxonomy" id="265669"/>
    <lineage>
        <taxon>Bacteria</taxon>
        <taxon>Bacillati</taxon>
        <taxon>Bacillota</taxon>
        <taxon>Bacilli</taxon>
        <taxon>Bacillales</taxon>
        <taxon>Listeriaceae</taxon>
        <taxon>Listeria</taxon>
    </lineage>
</organism>
<reference key="1">
    <citation type="journal article" date="2004" name="Nucleic Acids Res.">
        <title>Whole genome comparisons of serotype 4b and 1/2a strains of the food-borne pathogen Listeria monocytogenes reveal new insights into the core genome components of this species.</title>
        <authorList>
            <person name="Nelson K.E."/>
            <person name="Fouts D.E."/>
            <person name="Mongodin E.F."/>
            <person name="Ravel J."/>
            <person name="DeBoy R.T."/>
            <person name="Kolonay J.F."/>
            <person name="Rasko D.A."/>
            <person name="Angiuoli S.V."/>
            <person name="Gill S.R."/>
            <person name="Paulsen I.T."/>
            <person name="Peterson J.D."/>
            <person name="White O."/>
            <person name="Nelson W.C."/>
            <person name="Nierman W.C."/>
            <person name="Beanan M.J."/>
            <person name="Brinkac L.M."/>
            <person name="Daugherty S.C."/>
            <person name="Dodson R.J."/>
            <person name="Durkin A.S."/>
            <person name="Madupu R."/>
            <person name="Haft D.H."/>
            <person name="Selengut J."/>
            <person name="Van Aken S.E."/>
            <person name="Khouri H.M."/>
            <person name="Fedorova N."/>
            <person name="Forberger H.A."/>
            <person name="Tran B."/>
            <person name="Kathariou S."/>
            <person name="Wonderling L.D."/>
            <person name="Uhlich G.A."/>
            <person name="Bayles D.O."/>
            <person name="Luchansky J.B."/>
            <person name="Fraser C.M."/>
        </authorList>
    </citation>
    <scope>NUCLEOTIDE SEQUENCE [LARGE SCALE GENOMIC DNA]</scope>
    <source>
        <strain>F2365</strain>
    </source>
</reference>
<feature type="chain" id="PRO_0000200531" description="Pyruvate formate-lyase-activating enzyme">
    <location>
        <begin position="1"/>
        <end position="248"/>
    </location>
</feature>
<feature type="domain" description="Radical SAM core" evidence="3">
    <location>
        <begin position="17"/>
        <end position="248"/>
    </location>
</feature>
<feature type="binding site" evidence="2">
    <location>
        <position position="31"/>
    </location>
    <ligand>
        <name>[4Fe-4S] cluster</name>
        <dbReference type="ChEBI" id="CHEBI:49883"/>
        <note>4Fe-4S-S-AdoMet</note>
    </ligand>
</feature>
<feature type="binding site" evidence="2">
    <location>
        <position position="35"/>
    </location>
    <ligand>
        <name>[4Fe-4S] cluster</name>
        <dbReference type="ChEBI" id="CHEBI:49883"/>
        <note>4Fe-4S-S-AdoMet</note>
    </ligand>
</feature>
<feature type="binding site" evidence="2">
    <location>
        <begin position="37"/>
        <end position="39"/>
    </location>
    <ligand>
        <name>S-adenosyl-L-methionine</name>
        <dbReference type="ChEBI" id="CHEBI:59789"/>
    </ligand>
</feature>
<feature type="binding site" evidence="2">
    <location>
        <position position="38"/>
    </location>
    <ligand>
        <name>[4Fe-4S] cluster</name>
        <dbReference type="ChEBI" id="CHEBI:49883"/>
        <note>4Fe-4S-S-AdoMet</note>
    </ligand>
</feature>
<feature type="binding site" evidence="2">
    <location>
        <position position="80"/>
    </location>
    <ligand>
        <name>S-adenosyl-L-methionine</name>
        <dbReference type="ChEBI" id="CHEBI:59789"/>
    </ligand>
</feature>
<feature type="binding site" evidence="2">
    <location>
        <begin position="135"/>
        <end position="137"/>
    </location>
    <ligand>
        <name>S-adenosyl-L-methionine</name>
        <dbReference type="ChEBI" id="CHEBI:59789"/>
    </ligand>
</feature>
<feature type="binding site" evidence="2">
    <location>
        <position position="208"/>
    </location>
    <ligand>
        <name>S-adenosyl-L-methionine</name>
        <dbReference type="ChEBI" id="CHEBI:59789"/>
    </ligand>
</feature>
<sequence length="248" mass="28115">MTEVLGRVHSVETMGTVDGPGIRFIVFMQGCLLRCQFCHNPDTWKIGTGTERSAQDVFDEAIKYKEFWDASGGGVTVSGGEPLLQVDFLIEFFTLCKAAGVHTTIDSCGGCFTRDPEFIEKLDRLMEVTDLILLDIKQINPEKHLKLTTKSNAPIIDFAHYLRDKEQPIWIRHVLIPTKTDDPEDLTKLHEFIQTLPNVKQVDVLPYHTMGVYKWKEMGIRYPLEGIEAPEEEVVALANKILETSSYK</sequence>
<gene>
    <name type="primary">pflA</name>
    <name type="ordered locus">LMOf2365_1426</name>
</gene>
<name>PFLA_LISMF</name>
<proteinExistence type="inferred from homology"/>
<accession>Q71ZR3</accession>
<evidence type="ECO:0000250" key="1"/>
<evidence type="ECO:0000250" key="2">
    <source>
        <dbReference type="UniProtKB" id="P0A9N4"/>
    </source>
</evidence>
<evidence type="ECO:0000255" key="3">
    <source>
        <dbReference type="PROSITE-ProRule" id="PRU01266"/>
    </source>
</evidence>
<evidence type="ECO:0000305" key="4"/>
<protein>
    <recommendedName>
        <fullName>Pyruvate formate-lyase-activating enzyme</fullName>
        <shortName>PFL-activating enzyme</shortName>
        <ecNumber>1.97.1.4</ecNumber>
    </recommendedName>
</protein>
<comment type="function">
    <text evidence="1">Activation of pyruvate formate-lyase under anaerobic conditions by generation of an organic free radical, using S-adenosylmethionine and reduced flavodoxin as cosubstrates to produce 5'-deoxy-adenosine.</text>
</comment>
<comment type="catalytic activity">
    <reaction>
        <text>glycyl-[formate C-acetyltransferase] + reduced [flavodoxin] + S-adenosyl-L-methionine = glycin-2-yl radical-[formate C-acetyltransferase] + semiquinone [flavodoxin] + 5'-deoxyadenosine + L-methionine + H(+)</text>
        <dbReference type="Rhea" id="RHEA:19225"/>
        <dbReference type="Rhea" id="RHEA-COMP:10622"/>
        <dbReference type="Rhea" id="RHEA-COMP:12190"/>
        <dbReference type="Rhea" id="RHEA-COMP:12191"/>
        <dbReference type="Rhea" id="RHEA-COMP:14480"/>
        <dbReference type="ChEBI" id="CHEBI:15378"/>
        <dbReference type="ChEBI" id="CHEBI:17319"/>
        <dbReference type="ChEBI" id="CHEBI:29947"/>
        <dbReference type="ChEBI" id="CHEBI:32722"/>
        <dbReference type="ChEBI" id="CHEBI:57618"/>
        <dbReference type="ChEBI" id="CHEBI:57844"/>
        <dbReference type="ChEBI" id="CHEBI:59789"/>
        <dbReference type="ChEBI" id="CHEBI:140311"/>
        <dbReference type="EC" id="1.97.1.4"/>
    </reaction>
</comment>
<comment type="cofactor">
    <cofactor evidence="1">
        <name>[4Fe-4S] cluster</name>
        <dbReference type="ChEBI" id="CHEBI:49883"/>
    </cofactor>
    <text evidence="1">Binds 1 [4Fe-4S] cluster. The cluster is coordinated with 3 cysteines and an exchangeable S-adenosyl-L-methionine.</text>
</comment>
<comment type="subcellular location">
    <subcellularLocation>
        <location evidence="1">Cytoplasm</location>
    </subcellularLocation>
</comment>
<comment type="similarity">
    <text evidence="4">Belongs to the organic radical-activating enzymes family.</text>
</comment>